<name>IF6_THEKO</name>
<proteinExistence type="inferred from homology"/>
<feature type="chain" id="PRO_0000153757" description="Translation initiation factor 6">
    <location>
        <begin position="1"/>
        <end position="229"/>
    </location>
</feature>
<gene>
    <name evidence="1" type="primary">eif6</name>
    <name type="ordered locus">TK1321</name>
</gene>
<protein>
    <recommendedName>
        <fullName evidence="1">Translation initiation factor 6</fullName>
        <shortName evidence="1">aIF-6</shortName>
    </recommendedName>
</protein>
<dbReference type="EMBL" id="AP006878">
    <property type="protein sequence ID" value="BAD85510.1"/>
    <property type="molecule type" value="Genomic_DNA"/>
</dbReference>
<dbReference type="RefSeq" id="WP_011250272.1">
    <property type="nucleotide sequence ID" value="NC_006624.1"/>
</dbReference>
<dbReference type="SMR" id="Q5JGT4"/>
<dbReference type="FunCoup" id="Q5JGT4">
    <property type="interactions" value="145"/>
</dbReference>
<dbReference type="STRING" id="69014.TK1321"/>
<dbReference type="EnsemblBacteria" id="BAD85510">
    <property type="protein sequence ID" value="BAD85510"/>
    <property type="gene ID" value="TK1321"/>
</dbReference>
<dbReference type="GeneID" id="78447841"/>
<dbReference type="KEGG" id="tko:TK1321"/>
<dbReference type="PATRIC" id="fig|69014.16.peg.1293"/>
<dbReference type="eggNOG" id="arCOG04176">
    <property type="taxonomic scope" value="Archaea"/>
</dbReference>
<dbReference type="HOGENOM" id="CLU_071894_1_0_2"/>
<dbReference type="InParanoid" id="Q5JGT4"/>
<dbReference type="OrthoDB" id="33582at2157"/>
<dbReference type="PhylomeDB" id="Q5JGT4"/>
<dbReference type="Proteomes" id="UP000000536">
    <property type="component" value="Chromosome"/>
</dbReference>
<dbReference type="GO" id="GO:0005829">
    <property type="term" value="C:cytosol"/>
    <property type="evidence" value="ECO:0000318"/>
    <property type="project" value="GO_Central"/>
</dbReference>
<dbReference type="GO" id="GO:0043022">
    <property type="term" value="F:ribosome binding"/>
    <property type="evidence" value="ECO:0007669"/>
    <property type="project" value="InterPro"/>
</dbReference>
<dbReference type="GO" id="GO:0003743">
    <property type="term" value="F:translation initiation factor activity"/>
    <property type="evidence" value="ECO:0007669"/>
    <property type="project" value="UniProtKB-UniRule"/>
</dbReference>
<dbReference type="GO" id="GO:1902626">
    <property type="term" value="P:assembly of large subunit precursor of preribosome"/>
    <property type="evidence" value="ECO:0000318"/>
    <property type="project" value="GO_Central"/>
</dbReference>
<dbReference type="GO" id="GO:0042256">
    <property type="term" value="P:cytosolic ribosome assembly"/>
    <property type="evidence" value="ECO:0007669"/>
    <property type="project" value="InterPro"/>
</dbReference>
<dbReference type="GO" id="GO:0000460">
    <property type="term" value="P:maturation of 5.8S rRNA"/>
    <property type="evidence" value="ECO:0000318"/>
    <property type="project" value="GO_Central"/>
</dbReference>
<dbReference type="GO" id="GO:0000470">
    <property type="term" value="P:maturation of LSU-rRNA"/>
    <property type="evidence" value="ECO:0000318"/>
    <property type="project" value="GO_Central"/>
</dbReference>
<dbReference type="CDD" id="cd00527">
    <property type="entry name" value="IF6"/>
    <property type="match status" value="1"/>
</dbReference>
<dbReference type="FunFam" id="3.75.10.10:FF:000011">
    <property type="entry name" value="Translation initiation factor 6"/>
    <property type="match status" value="1"/>
</dbReference>
<dbReference type="Gene3D" id="3.75.10.10">
    <property type="entry name" value="L-arginine/glycine Amidinotransferase, Chain A"/>
    <property type="match status" value="1"/>
</dbReference>
<dbReference type="HAMAP" id="MF_00032">
    <property type="entry name" value="eIF_6"/>
    <property type="match status" value="1"/>
</dbReference>
<dbReference type="InterPro" id="IPR002769">
    <property type="entry name" value="eIF6"/>
</dbReference>
<dbReference type="NCBIfam" id="TIGR00323">
    <property type="entry name" value="eIF-6"/>
    <property type="match status" value="1"/>
</dbReference>
<dbReference type="NCBIfam" id="NF003129">
    <property type="entry name" value="PRK04046.1-5"/>
    <property type="match status" value="1"/>
</dbReference>
<dbReference type="PANTHER" id="PTHR10784">
    <property type="entry name" value="TRANSLATION INITIATION FACTOR 6"/>
    <property type="match status" value="1"/>
</dbReference>
<dbReference type="Pfam" id="PF01912">
    <property type="entry name" value="eIF-6"/>
    <property type="match status" value="1"/>
</dbReference>
<dbReference type="PIRSF" id="PIRSF006413">
    <property type="entry name" value="IF-6"/>
    <property type="match status" value="1"/>
</dbReference>
<dbReference type="SMART" id="SM00654">
    <property type="entry name" value="eIF6"/>
    <property type="match status" value="1"/>
</dbReference>
<dbReference type="SUPFAM" id="SSF55909">
    <property type="entry name" value="Pentein"/>
    <property type="match status" value="1"/>
</dbReference>
<organism>
    <name type="scientific">Thermococcus kodakarensis (strain ATCC BAA-918 / JCM 12380 / KOD1)</name>
    <name type="common">Pyrococcus kodakaraensis (strain KOD1)</name>
    <dbReference type="NCBI Taxonomy" id="69014"/>
    <lineage>
        <taxon>Archaea</taxon>
        <taxon>Methanobacteriati</taxon>
        <taxon>Methanobacteriota</taxon>
        <taxon>Thermococci</taxon>
        <taxon>Thermococcales</taxon>
        <taxon>Thermococcaceae</taxon>
        <taxon>Thermococcus</taxon>
    </lineage>
</organism>
<comment type="function">
    <text evidence="1">Binds to the 50S ribosomal subunit and prevents its association with the 30S ribosomal subunit to form the 70S initiation complex.</text>
</comment>
<comment type="similarity">
    <text evidence="1">Belongs to the eIF-6 family.</text>
</comment>
<accession>Q5JGT4</accession>
<evidence type="ECO:0000255" key="1">
    <source>
        <dbReference type="HAMAP-Rule" id="MF_00032"/>
    </source>
</evidence>
<reference key="1">
    <citation type="journal article" date="2005" name="Genome Res.">
        <title>Complete genome sequence of the hyperthermophilic archaeon Thermococcus kodakaraensis KOD1 and comparison with Pyrococcus genomes.</title>
        <authorList>
            <person name="Fukui T."/>
            <person name="Atomi H."/>
            <person name="Kanai T."/>
            <person name="Matsumi R."/>
            <person name="Fujiwara S."/>
            <person name="Imanaka T."/>
        </authorList>
    </citation>
    <scope>NUCLEOTIDE SEQUENCE [LARGE SCALE GENOMIC DNA]</scope>
    <source>
        <strain>ATCC BAA-918 / JCM 12380 / KOD1</strain>
    </source>
</reference>
<keyword id="KW-0396">Initiation factor</keyword>
<keyword id="KW-0648">Protein biosynthesis</keyword>
<keyword id="KW-1185">Reference proteome</keyword>
<sequence>MHIERLDFENSPYLGVYGRATDRVLLLREGLGEKKLEVLREVLKVPIIETSIMKSRIVGIFAAGNSNAIIVPWYIWDAELERIKTALNEFGIDMDVVPFKSRLTALGNLILTNDKAALVSKEFTREEANAIGEILGVDEVERGMIASYRSVGSVGVVTNKGGLVHPEATDEELEWLSDLFGVDIYVGTANMGVPFVGSCMLANSYGVVVGHLTTGPEIVKIEEALGFLG</sequence>